<sequence length="88" mass="9980">MSKLFFVAFLCLIISVFATTPDEIGCTDISQAEFDEKNANCIKCGEEGFGEEMVKRCRNKCFTDNFYQSCVDQLNGVYEEKDTPPVKE</sequence>
<comment type="function">
    <text evidence="1">May increase the toxicity of alpha-latrotoxin and/or other venom components. Is non-toxic to mice and to the cockroach Periplaneta americana.</text>
</comment>
<comment type="subcellular location">
    <subcellularLocation>
        <location evidence="1">Secreted</location>
    </subcellularLocation>
</comment>
<comment type="tissue specificity">
    <text evidence="3">Expressed by the venom gland.</text>
</comment>
<comment type="miscellaneous">
    <text evidence="1">Co-purifies with alpha-latrotoxin.</text>
</comment>
<comment type="similarity">
    <text>Belongs to the arthropod CHH/MIH/GIH/VIH hormone family.</text>
</comment>
<keyword id="KW-0964">Secreted</keyword>
<keyword id="KW-0732">Signal</keyword>
<organism>
    <name type="scientific">Latrodectus hesperus</name>
    <name type="common">Western black widow spider</name>
    <dbReference type="NCBI Taxonomy" id="256737"/>
    <lineage>
        <taxon>Eukaryota</taxon>
        <taxon>Metazoa</taxon>
        <taxon>Ecdysozoa</taxon>
        <taxon>Arthropoda</taxon>
        <taxon>Chelicerata</taxon>
        <taxon>Arachnida</taxon>
        <taxon>Araneae</taxon>
        <taxon>Araneomorphae</taxon>
        <taxon>Entelegynae</taxon>
        <taxon>Araneoidea</taxon>
        <taxon>Theridiidae</taxon>
        <taxon>Latrodectus</taxon>
    </lineage>
</organism>
<name>TXA1_LATHE</name>
<evidence type="ECO:0000250" key="1">
    <source>
        <dbReference type="UniProtKB" id="P49125"/>
    </source>
</evidence>
<evidence type="ECO:0000303" key="2">
    <source>
    </source>
</evidence>
<evidence type="ECO:0000305" key="3"/>
<dbReference type="EMBL" id="KF751506">
    <property type="protein sequence ID" value="AHC13251.1"/>
    <property type="molecule type" value="mRNA"/>
</dbReference>
<dbReference type="EMBL" id="KF751507">
    <property type="protein sequence ID" value="AHC13252.1"/>
    <property type="molecule type" value="mRNA"/>
</dbReference>
<dbReference type="EMBL" id="KF751508">
    <property type="protein sequence ID" value="AHC13253.1"/>
    <property type="molecule type" value="mRNA"/>
</dbReference>
<dbReference type="SMR" id="V9QFH5"/>
<dbReference type="GO" id="GO:0005576">
    <property type="term" value="C:extracellular region"/>
    <property type="evidence" value="ECO:0007669"/>
    <property type="project" value="UniProtKB-SubCell"/>
</dbReference>
<dbReference type="Gene3D" id="1.10.2010.10">
    <property type="entry name" value="Crustacean CHH/MIH/GIH neurohormone"/>
    <property type="match status" value="1"/>
</dbReference>
<dbReference type="InterPro" id="IPR035957">
    <property type="entry name" value="Crust_neurohorm_sf"/>
</dbReference>
<dbReference type="SUPFAM" id="SSF81778">
    <property type="entry name" value="Crustacean CHH/MIH/GIH neurohormone"/>
    <property type="match status" value="1"/>
</dbReference>
<feature type="signal peptide" evidence="1">
    <location>
        <begin position="1"/>
        <end position="18"/>
    </location>
</feature>
<feature type="chain" id="PRO_0000432878" description="Alpha-latrotoxin associated low molecular weight protein">
    <location>
        <begin position="19"/>
        <end position="88"/>
    </location>
</feature>
<feature type="sequence conflict" description="In Ref. 1; AHC13251." evidence="3" ref="1">
    <original>D</original>
    <variation>N</variation>
    <location>
        <position position="22"/>
    </location>
</feature>
<feature type="sequence conflict" description="In Ref. 1; AHC13251." evidence="3" ref="1">
    <original>D</original>
    <variation>N</variation>
    <location>
        <position position="28"/>
    </location>
</feature>
<feature type="sequence conflict" description="In Ref. 1; AHC13251." evidence="3" ref="1">
    <original>A</original>
    <variation>E</variation>
    <location>
        <position position="32"/>
    </location>
</feature>
<feature type="sequence conflict" description="In Ref. 1; AHC13251/AHC13252." evidence="3" ref="1">
    <original>G</original>
    <variation>D</variation>
    <location>
        <position position="48"/>
    </location>
</feature>
<feature type="sequence conflict" description="In Ref. 1; AHC13251." evidence="3" ref="1">
    <original>M</original>
    <variation>I</variation>
    <location>
        <position position="53"/>
    </location>
</feature>
<feature type="sequence conflict" description="In Ref. 1; AHC13252." evidence="3" ref="1">
    <original>N</original>
    <variation>D</variation>
    <location>
        <position position="59"/>
    </location>
</feature>
<feature type="sequence conflict" description="In Ref. 1; AHC13251/AHC13252." evidence="3" ref="1">
    <original>V</original>
    <variation>A</variation>
    <location>
        <position position="86"/>
    </location>
</feature>
<accession>V9QFH5</accession>
<accession>V9QEQ7</accession>
<accession>V9QF66</accession>
<protein>
    <recommendedName>
        <fullName evidence="2">Alpha-latrotoxin associated low molecular weight protein</fullName>
        <shortName evidence="2">Alpha-latrotoxin-associated LMWP</shortName>
    </recommendedName>
    <alternativeName>
        <fullName evidence="1">Latrodectin-1</fullName>
        <shortName evidence="2">Latrodectin</shortName>
    </alternativeName>
</protein>
<reference key="1">
    <citation type="journal article" date="2014" name="Gene">
        <title>Recruitment and diversification of an ecdysozoan family of neuropeptide hormones for black widow spider venom expression.</title>
        <authorList>
            <person name="McCowan C."/>
            <person name="Garb J.E."/>
        </authorList>
    </citation>
    <scope>NUCLEOTIDE SEQUENCE [MRNA]</scope>
    <source>
        <tissue>Venom gland</tissue>
    </source>
</reference>
<proteinExistence type="inferred from homology"/>